<protein>
    <recommendedName>
        <fullName evidence="1">DNA ligase</fullName>
        <ecNumber evidence="1">6.5.1.2</ecNumber>
    </recommendedName>
    <alternativeName>
        <fullName evidence="1">Polydeoxyribonucleotide synthase [NAD(+)]</fullName>
    </alternativeName>
</protein>
<sequence length="821" mass="88769">MSPSPAERAEDLRRQIAQANRAYHELDAPEIPDVDYDRMVRELEALEREHPELARADSPTQQVGARPSGRFAEVRHAVPMLSLSNAFSDEEVADFVRRIDERLGRRSLQFSAEPKMDGLAISLRYEEGHFVLGATRGDGSTGEDVTANLREIGDIPKRLNGKDWPDVLEVRGEVYMARADFEAYNERARLQGGKVLANPRNAAAGSLRQLDPKISAQRKLSFFAYGTGEVQGGELPDTHSGTLAQLGSWGFPVSALCRVVDGTDGLLGYYRDIGERRDGLPFDIDGVVYKLDDRAGQQAMGFVSRAPRWAIAHKFPAQEQSTTVEAIEIQIGRTGAATPVARLAPVAVAGVIVSNATLHNADQIARLDVRVGDSVIVRRAGDVIPEVVSVILDRRPQGTTPWQMPTQCPVCGSEIVREEGAAAWRCSGELSCPAQRKEAIAHFASRRAMDIDGLGDKYIETLVDAGIVKGVADLYRLSRDQLLHLKLVLDAEDPSALAAALKLHLPAEGSGAVLNAVLKLDGNDPGWRAQALVQPASFEWNTKKIATKWADNLIAAIDASRAATLERLLFALGIEHVGESTAKALAQWFGDLELIRHLPWPLFKRVPDIGGEVARSLGHFFEQQGNQQAIDDLLQVGQVRISDAHAPSAKLREGLDLAQLLVESEIPGITRLRAEKLVAALPSAQAVLDAEHGQFVNAGLPDDTARGLAEWLDAEGHGAMLLAAEKAMRQILAKAPALAEIVAGPLDGQTVVLTGTLAQLTRDAAKERLEALGAKVSGSVSKKTSFVVAGTEAGSKLDKAQSLGVPVWDEDRLLAYLAEHE</sequence>
<gene>
    <name evidence="1" type="primary">ligA</name>
    <name type="ordered locus">Smal_2583</name>
</gene>
<name>DNLJ_STRM5</name>
<evidence type="ECO:0000255" key="1">
    <source>
        <dbReference type="HAMAP-Rule" id="MF_01588"/>
    </source>
</evidence>
<organism>
    <name type="scientific">Stenotrophomonas maltophilia (strain R551-3)</name>
    <dbReference type="NCBI Taxonomy" id="391008"/>
    <lineage>
        <taxon>Bacteria</taxon>
        <taxon>Pseudomonadati</taxon>
        <taxon>Pseudomonadota</taxon>
        <taxon>Gammaproteobacteria</taxon>
        <taxon>Lysobacterales</taxon>
        <taxon>Lysobacteraceae</taxon>
        <taxon>Stenotrophomonas</taxon>
        <taxon>Stenotrophomonas maltophilia group</taxon>
    </lineage>
</organism>
<accession>B4SP88</accession>
<proteinExistence type="inferred from homology"/>
<comment type="function">
    <text evidence="1">DNA ligase that catalyzes the formation of phosphodiester linkages between 5'-phosphoryl and 3'-hydroxyl groups in double-stranded DNA using NAD as a coenzyme and as the energy source for the reaction. It is essential for DNA replication and repair of damaged DNA.</text>
</comment>
<comment type="catalytic activity">
    <reaction evidence="1">
        <text>NAD(+) + (deoxyribonucleotide)n-3'-hydroxyl + 5'-phospho-(deoxyribonucleotide)m = (deoxyribonucleotide)n+m + AMP + beta-nicotinamide D-nucleotide.</text>
        <dbReference type="EC" id="6.5.1.2"/>
    </reaction>
</comment>
<comment type="cofactor">
    <cofactor evidence="1">
        <name>Mg(2+)</name>
        <dbReference type="ChEBI" id="CHEBI:18420"/>
    </cofactor>
    <cofactor evidence="1">
        <name>Mn(2+)</name>
        <dbReference type="ChEBI" id="CHEBI:29035"/>
    </cofactor>
</comment>
<comment type="similarity">
    <text evidence="1">Belongs to the NAD-dependent DNA ligase family. LigA subfamily.</text>
</comment>
<dbReference type="EC" id="6.5.1.2" evidence="1"/>
<dbReference type="EMBL" id="CP001111">
    <property type="protein sequence ID" value="ACF52283.1"/>
    <property type="molecule type" value="Genomic_DNA"/>
</dbReference>
<dbReference type="SMR" id="B4SP88"/>
<dbReference type="STRING" id="391008.Smal_2583"/>
<dbReference type="KEGG" id="smt:Smal_2583"/>
<dbReference type="eggNOG" id="COG0272">
    <property type="taxonomic scope" value="Bacteria"/>
</dbReference>
<dbReference type="HOGENOM" id="CLU_007764_2_1_6"/>
<dbReference type="OrthoDB" id="9759736at2"/>
<dbReference type="Proteomes" id="UP000001867">
    <property type="component" value="Chromosome"/>
</dbReference>
<dbReference type="GO" id="GO:0005829">
    <property type="term" value="C:cytosol"/>
    <property type="evidence" value="ECO:0007669"/>
    <property type="project" value="TreeGrafter"/>
</dbReference>
<dbReference type="GO" id="GO:0003911">
    <property type="term" value="F:DNA ligase (NAD+) activity"/>
    <property type="evidence" value="ECO:0007669"/>
    <property type="project" value="UniProtKB-UniRule"/>
</dbReference>
<dbReference type="GO" id="GO:0046872">
    <property type="term" value="F:metal ion binding"/>
    <property type="evidence" value="ECO:0007669"/>
    <property type="project" value="UniProtKB-KW"/>
</dbReference>
<dbReference type="GO" id="GO:0006281">
    <property type="term" value="P:DNA repair"/>
    <property type="evidence" value="ECO:0007669"/>
    <property type="project" value="UniProtKB-KW"/>
</dbReference>
<dbReference type="GO" id="GO:0006260">
    <property type="term" value="P:DNA replication"/>
    <property type="evidence" value="ECO:0007669"/>
    <property type="project" value="UniProtKB-KW"/>
</dbReference>
<dbReference type="CDD" id="cd17748">
    <property type="entry name" value="BRCT_DNA_ligase_like"/>
    <property type="match status" value="1"/>
</dbReference>
<dbReference type="CDD" id="cd00114">
    <property type="entry name" value="LIGANc"/>
    <property type="match status" value="1"/>
</dbReference>
<dbReference type="FunFam" id="1.10.150.20:FF:000006">
    <property type="entry name" value="DNA ligase"/>
    <property type="match status" value="1"/>
</dbReference>
<dbReference type="FunFam" id="1.10.150.20:FF:000007">
    <property type="entry name" value="DNA ligase"/>
    <property type="match status" value="1"/>
</dbReference>
<dbReference type="FunFam" id="2.40.50.140:FF:000012">
    <property type="entry name" value="DNA ligase"/>
    <property type="match status" value="1"/>
</dbReference>
<dbReference type="FunFam" id="3.30.470.30:FF:000001">
    <property type="entry name" value="DNA ligase"/>
    <property type="match status" value="1"/>
</dbReference>
<dbReference type="FunFam" id="3.40.50.10190:FF:000054">
    <property type="entry name" value="DNA ligase"/>
    <property type="match status" value="1"/>
</dbReference>
<dbReference type="Gene3D" id="6.20.10.30">
    <property type="match status" value="1"/>
</dbReference>
<dbReference type="Gene3D" id="1.10.150.20">
    <property type="entry name" value="5' to 3' exonuclease, C-terminal subdomain"/>
    <property type="match status" value="2"/>
</dbReference>
<dbReference type="Gene3D" id="3.40.50.10190">
    <property type="entry name" value="BRCT domain"/>
    <property type="match status" value="1"/>
</dbReference>
<dbReference type="Gene3D" id="3.30.470.30">
    <property type="entry name" value="DNA ligase/mRNA capping enzyme"/>
    <property type="match status" value="1"/>
</dbReference>
<dbReference type="Gene3D" id="1.10.287.610">
    <property type="entry name" value="Helix hairpin bin"/>
    <property type="match status" value="1"/>
</dbReference>
<dbReference type="Gene3D" id="2.40.50.140">
    <property type="entry name" value="Nucleic acid-binding proteins"/>
    <property type="match status" value="1"/>
</dbReference>
<dbReference type="HAMAP" id="MF_01588">
    <property type="entry name" value="DNA_ligase_A"/>
    <property type="match status" value="1"/>
</dbReference>
<dbReference type="InterPro" id="IPR001357">
    <property type="entry name" value="BRCT_dom"/>
</dbReference>
<dbReference type="InterPro" id="IPR036420">
    <property type="entry name" value="BRCT_dom_sf"/>
</dbReference>
<dbReference type="InterPro" id="IPR041663">
    <property type="entry name" value="DisA/LigA_HHH"/>
</dbReference>
<dbReference type="InterPro" id="IPR001679">
    <property type="entry name" value="DNA_ligase"/>
</dbReference>
<dbReference type="InterPro" id="IPR018239">
    <property type="entry name" value="DNA_ligase_AS"/>
</dbReference>
<dbReference type="InterPro" id="IPR013839">
    <property type="entry name" value="DNAligase_adenylation"/>
</dbReference>
<dbReference type="InterPro" id="IPR013840">
    <property type="entry name" value="DNAligase_N"/>
</dbReference>
<dbReference type="InterPro" id="IPR012340">
    <property type="entry name" value="NA-bd_OB-fold"/>
</dbReference>
<dbReference type="InterPro" id="IPR004150">
    <property type="entry name" value="NAD_DNA_ligase_OB"/>
</dbReference>
<dbReference type="InterPro" id="IPR010994">
    <property type="entry name" value="RuvA_2-like"/>
</dbReference>
<dbReference type="InterPro" id="IPR004149">
    <property type="entry name" value="Znf_DNAligase_C4"/>
</dbReference>
<dbReference type="NCBIfam" id="TIGR00575">
    <property type="entry name" value="dnlj"/>
    <property type="match status" value="1"/>
</dbReference>
<dbReference type="NCBIfam" id="NF005932">
    <property type="entry name" value="PRK07956.1"/>
    <property type="match status" value="1"/>
</dbReference>
<dbReference type="PANTHER" id="PTHR23389">
    <property type="entry name" value="CHROMOSOME TRANSMISSION FIDELITY FACTOR 18"/>
    <property type="match status" value="1"/>
</dbReference>
<dbReference type="PANTHER" id="PTHR23389:SF9">
    <property type="entry name" value="DNA LIGASE"/>
    <property type="match status" value="1"/>
</dbReference>
<dbReference type="Pfam" id="PF00533">
    <property type="entry name" value="BRCT"/>
    <property type="match status" value="1"/>
</dbReference>
<dbReference type="Pfam" id="PF01653">
    <property type="entry name" value="DNA_ligase_aden"/>
    <property type="match status" value="1"/>
</dbReference>
<dbReference type="Pfam" id="PF03120">
    <property type="entry name" value="DNA_ligase_OB"/>
    <property type="match status" value="1"/>
</dbReference>
<dbReference type="Pfam" id="PF03119">
    <property type="entry name" value="DNA_ligase_ZBD"/>
    <property type="match status" value="1"/>
</dbReference>
<dbReference type="Pfam" id="PF12826">
    <property type="entry name" value="HHH_2"/>
    <property type="match status" value="1"/>
</dbReference>
<dbReference type="Pfam" id="PF22745">
    <property type="entry name" value="Nlig-Ia"/>
    <property type="match status" value="1"/>
</dbReference>
<dbReference type="PIRSF" id="PIRSF001604">
    <property type="entry name" value="LigA"/>
    <property type="match status" value="1"/>
</dbReference>
<dbReference type="SMART" id="SM00292">
    <property type="entry name" value="BRCT"/>
    <property type="match status" value="1"/>
</dbReference>
<dbReference type="SMART" id="SM00532">
    <property type="entry name" value="LIGANc"/>
    <property type="match status" value="1"/>
</dbReference>
<dbReference type="SUPFAM" id="SSF52113">
    <property type="entry name" value="BRCT domain"/>
    <property type="match status" value="1"/>
</dbReference>
<dbReference type="SUPFAM" id="SSF56091">
    <property type="entry name" value="DNA ligase/mRNA capping enzyme, catalytic domain"/>
    <property type="match status" value="1"/>
</dbReference>
<dbReference type="SUPFAM" id="SSF50249">
    <property type="entry name" value="Nucleic acid-binding proteins"/>
    <property type="match status" value="1"/>
</dbReference>
<dbReference type="SUPFAM" id="SSF47781">
    <property type="entry name" value="RuvA domain 2-like"/>
    <property type="match status" value="1"/>
</dbReference>
<dbReference type="PROSITE" id="PS50172">
    <property type="entry name" value="BRCT"/>
    <property type="match status" value="1"/>
</dbReference>
<dbReference type="PROSITE" id="PS01055">
    <property type="entry name" value="DNA_LIGASE_N1"/>
    <property type="match status" value="1"/>
</dbReference>
<keyword id="KW-0227">DNA damage</keyword>
<keyword id="KW-0234">DNA repair</keyword>
<keyword id="KW-0235">DNA replication</keyword>
<keyword id="KW-0436">Ligase</keyword>
<keyword id="KW-0460">Magnesium</keyword>
<keyword id="KW-0464">Manganese</keyword>
<keyword id="KW-0479">Metal-binding</keyword>
<keyword id="KW-0520">NAD</keyword>
<keyword id="KW-0862">Zinc</keyword>
<reference key="1">
    <citation type="submission" date="2008-06" db="EMBL/GenBank/DDBJ databases">
        <title>Complete sequence of Stenotrophomonas maltophilia R551-3.</title>
        <authorList>
            <consortium name="US DOE Joint Genome Institute"/>
            <person name="Lucas S."/>
            <person name="Copeland A."/>
            <person name="Lapidus A."/>
            <person name="Glavina del Rio T."/>
            <person name="Dalin E."/>
            <person name="Tice H."/>
            <person name="Pitluck S."/>
            <person name="Chain P."/>
            <person name="Malfatti S."/>
            <person name="Shin M."/>
            <person name="Vergez L."/>
            <person name="Lang D."/>
            <person name="Schmutz J."/>
            <person name="Larimer F."/>
            <person name="Land M."/>
            <person name="Hauser L."/>
            <person name="Kyrpides N."/>
            <person name="Mikhailova N."/>
            <person name="Taghavi S."/>
            <person name="Monchy S."/>
            <person name="Newman L."/>
            <person name="Vangronsveld J."/>
            <person name="van der Lelie D."/>
            <person name="Richardson P."/>
        </authorList>
    </citation>
    <scope>NUCLEOTIDE SEQUENCE [LARGE SCALE GENOMIC DNA]</scope>
    <source>
        <strain>R551-3</strain>
    </source>
</reference>
<feature type="chain" id="PRO_0000380477" description="DNA ligase">
    <location>
        <begin position="1"/>
        <end position="821"/>
    </location>
</feature>
<feature type="domain" description="BRCT" evidence="1">
    <location>
        <begin position="741"/>
        <end position="821"/>
    </location>
</feature>
<feature type="active site" description="N6-AMP-lysine intermediate" evidence="1">
    <location>
        <position position="115"/>
    </location>
</feature>
<feature type="binding site" evidence="1">
    <location>
        <begin position="33"/>
        <end position="37"/>
    </location>
    <ligand>
        <name>NAD(+)</name>
        <dbReference type="ChEBI" id="CHEBI:57540"/>
    </ligand>
</feature>
<feature type="binding site" evidence="1">
    <location>
        <begin position="82"/>
        <end position="83"/>
    </location>
    <ligand>
        <name>NAD(+)</name>
        <dbReference type="ChEBI" id="CHEBI:57540"/>
    </ligand>
</feature>
<feature type="binding site" evidence="1">
    <location>
        <position position="113"/>
    </location>
    <ligand>
        <name>NAD(+)</name>
        <dbReference type="ChEBI" id="CHEBI:57540"/>
    </ligand>
</feature>
<feature type="binding site" evidence="1">
    <location>
        <position position="136"/>
    </location>
    <ligand>
        <name>NAD(+)</name>
        <dbReference type="ChEBI" id="CHEBI:57540"/>
    </ligand>
</feature>
<feature type="binding site" evidence="1">
    <location>
        <position position="173"/>
    </location>
    <ligand>
        <name>NAD(+)</name>
        <dbReference type="ChEBI" id="CHEBI:57540"/>
    </ligand>
</feature>
<feature type="binding site" evidence="1">
    <location>
        <position position="290"/>
    </location>
    <ligand>
        <name>NAD(+)</name>
        <dbReference type="ChEBI" id="CHEBI:57540"/>
    </ligand>
</feature>
<feature type="binding site" evidence="1">
    <location>
        <position position="314"/>
    </location>
    <ligand>
        <name>NAD(+)</name>
        <dbReference type="ChEBI" id="CHEBI:57540"/>
    </ligand>
</feature>
<feature type="binding site" evidence="1">
    <location>
        <position position="408"/>
    </location>
    <ligand>
        <name>Zn(2+)</name>
        <dbReference type="ChEBI" id="CHEBI:29105"/>
    </ligand>
</feature>
<feature type="binding site" evidence="1">
    <location>
        <position position="411"/>
    </location>
    <ligand>
        <name>Zn(2+)</name>
        <dbReference type="ChEBI" id="CHEBI:29105"/>
    </ligand>
</feature>
<feature type="binding site" evidence="1">
    <location>
        <position position="426"/>
    </location>
    <ligand>
        <name>Zn(2+)</name>
        <dbReference type="ChEBI" id="CHEBI:29105"/>
    </ligand>
</feature>
<feature type="binding site" evidence="1">
    <location>
        <position position="432"/>
    </location>
    <ligand>
        <name>Zn(2+)</name>
        <dbReference type="ChEBI" id="CHEBI:29105"/>
    </ligand>
</feature>